<dbReference type="EMBL" id="AE017198">
    <property type="protein sequence ID" value="AAS08401.1"/>
    <property type="molecule type" value="Genomic_DNA"/>
</dbReference>
<dbReference type="RefSeq" id="WP_004895752.1">
    <property type="nucleotide sequence ID" value="NC_005362.1"/>
</dbReference>
<dbReference type="SMR" id="P62435"/>
<dbReference type="GeneID" id="83569831"/>
<dbReference type="KEGG" id="ljo:LJ_0410"/>
<dbReference type="eggNOG" id="COG0080">
    <property type="taxonomic scope" value="Bacteria"/>
</dbReference>
<dbReference type="HOGENOM" id="CLU_074237_2_1_9"/>
<dbReference type="Proteomes" id="UP000000581">
    <property type="component" value="Chromosome"/>
</dbReference>
<dbReference type="GO" id="GO:0022625">
    <property type="term" value="C:cytosolic large ribosomal subunit"/>
    <property type="evidence" value="ECO:0007669"/>
    <property type="project" value="TreeGrafter"/>
</dbReference>
<dbReference type="GO" id="GO:0070180">
    <property type="term" value="F:large ribosomal subunit rRNA binding"/>
    <property type="evidence" value="ECO:0007669"/>
    <property type="project" value="UniProtKB-UniRule"/>
</dbReference>
<dbReference type="GO" id="GO:0003735">
    <property type="term" value="F:structural constituent of ribosome"/>
    <property type="evidence" value="ECO:0007669"/>
    <property type="project" value="InterPro"/>
</dbReference>
<dbReference type="GO" id="GO:0006412">
    <property type="term" value="P:translation"/>
    <property type="evidence" value="ECO:0007669"/>
    <property type="project" value="UniProtKB-UniRule"/>
</dbReference>
<dbReference type="CDD" id="cd00349">
    <property type="entry name" value="Ribosomal_L11"/>
    <property type="match status" value="1"/>
</dbReference>
<dbReference type="FunFam" id="1.10.10.250:FF:000001">
    <property type="entry name" value="50S ribosomal protein L11"/>
    <property type="match status" value="1"/>
</dbReference>
<dbReference type="FunFam" id="3.30.1550.10:FF:000001">
    <property type="entry name" value="50S ribosomal protein L11"/>
    <property type="match status" value="1"/>
</dbReference>
<dbReference type="Gene3D" id="1.10.10.250">
    <property type="entry name" value="Ribosomal protein L11, C-terminal domain"/>
    <property type="match status" value="1"/>
</dbReference>
<dbReference type="Gene3D" id="3.30.1550.10">
    <property type="entry name" value="Ribosomal protein L11/L12, N-terminal domain"/>
    <property type="match status" value="1"/>
</dbReference>
<dbReference type="HAMAP" id="MF_00736">
    <property type="entry name" value="Ribosomal_uL11"/>
    <property type="match status" value="1"/>
</dbReference>
<dbReference type="InterPro" id="IPR000911">
    <property type="entry name" value="Ribosomal_uL11"/>
</dbReference>
<dbReference type="InterPro" id="IPR006519">
    <property type="entry name" value="Ribosomal_uL11_bac-typ"/>
</dbReference>
<dbReference type="InterPro" id="IPR020783">
    <property type="entry name" value="Ribosomal_uL11_C"/>
</dbReference>
<dbReference type="InterPro" id="IPR036769">
    <property type="entry name" value="Ribosomal_uL11_C_sf"/>
</dbReference>
<dbReference type="InterPro" id="IPR020785">
    <property type="entry name" value="Ribosomal_uL11_CS"/>
</dbReference>
<dbReference type="InterPro" id="IPR020784">
    <property type="entry name" value="Ribosomal_uL11_N"/>
</dbReference>
<dbReference type="InterPro" id="IPR036796">
    <property type="entry name" value="Ribosomal_uL11_N_sf"/>
</dbReference>
<dbReference type="NCBIfam" id="TIGR01632">
    <property type="entry name" value="L11_bact"/>
    <property type="match status" value="1"/>
</dbReference>
<dbReference type="PANTHER" id="PTHR11661">
    <property type="entry name" value="60S RIBOSOMAL PROTEIN L12"/>
    <property type="match status" value="1"/>
</dbReference>
<dbReference type="PANTHER" id="PTHR11661:SF1">
    <property type="entry name" value="LARGE RIBOSOMAL SUBUNIT PROTEIN UL11M"/>
    <property type="match status" value="1"/>
</dbReference>
<dbReference type="Pfam" id="PF00298">
    <property type="entry name" value="Ribosomal_L11"/>
    <property type="match status" value="1"/>
</dbReference>
<dbReference type="Pfam" id="PF03946">
    <property type="entry name" value="Ribosomal_L11_N"/>
    <property type="match status" value="1"/>
</dbReference>
<dbReference type="SMART" id="SM00649">
    <property type="entry name" value="RL11"/>
    <property type="match status" value="1"/>
</dbReference>
<dbReference type="SUPFAM" id="SSF54747">
    <property type="entry name" value="Ribosomal L11/L12e N-terminal domain"/>
    <property type="match status" value="1"/>
</dbReference>
<dbReference type="SUPFAM" id="SSF46906">
    <property type="entry name" value="Ribosomal protein L11, C-terminal domain"/>
    <property type="match status" value="1"/>
</dbReference>
<dbReference type="PROSITE" id="PS00359">
    <property type="entry name" value="RIBOSOMAL_L11"/>
    <property type="match status" value="1"/>
</dbReference>
<name>RL11_LACJO</name>
<proteinExistence type="inferred from homology"/>
<protein>
    <recommendedName>
        <fullName evidence="1">Large ribosomal subunit protein uL11</fullName>
    </recommendedName>
    <alternativeName>
        <fullName evidence="2">50S ribosomal protein L11</fullName>
    </alternativeName>
</protein>
<reference key="1">
    <citation type="journal article" date="2004" name="Proc. Natl. Acad. Sci. U.S.A.">
        <title>The genome sequence of the probiotic intestinal bacterium Lactobacillus johnsonii NCC 533.</title>
        <authorList>
            <person name="Pridmore R.D."/>
            <person name="Berger B."/>
            <person name="Desiere F."/>
            <person name="Vilanova D."/>
            <person name="Barretto C."/>
            <person name="Pittet A.-C."/>
            <person name="Zwahlen M.-C."/>
            <person name="Rouvet M."/>
            <person name="Altermann E."/>
            <person name="Barrangou R."/>
            <person name="Mollet B."/>
            <person name="Mercenier A."/>
            <person name="Klaenhammer T."/>
            <person name="Arigoni F."/>
            <person name="Schell M.A."/>
        </authorList>
    </citation>
    <scope>NUCLEOTIDE SEQUENCE [LARGE SCALE GENOMIC DNA]</scope>
    <source>
        <strain>CNCM I-1225 / La1 / NCC 533</strain>
    </source>
</reference>
<feature type="chain" id="PRO_0000104299" description="Large ribosomal subunit protein uL11">
    <location>
        <begin position="1"/>
        <end position="141"/>
    </location>
</feature>
<gene>
    <name evidence="1" type="primary">rplK</name>
    <name type="ordered locus">LJ_0410</name>
</gene>
<sequence length="141" mass="14983">MAKKVINVVKLQIPAGAATPAPPVGPALGQAGINIVGFTKDFNARTADQKGMIIPVVITVYEDRSFEFITKTPPAAVLLKKAAKVDKGSGEPNTKKVAKVTKDQVKEIAETKMKDLNAADIEAAMRMIEGTARSMGFTVED</sequence>
<evidence type="ECO:0000255" key="1">
    <source>
        <dbReference type="HAMAP-Rule" id="MF_00736"/>
    </source>
</evidence>
<evidence type="ECO:0000305" key="2"/>
<keyword id="KW-0488">Methylation</keyword>
<keyword id="KW-0687">Ribonucleoprotein</keyword>
<keyword id="KW-0689">Ribosomal protein</keyword>
<keyword id="KW-0694">RNA-binding</keyword>
<keyword id="KW-0699">rRNA-binding</keyword>
<organism>
    <name type="scientific">Lactobacillus johnsonii (strain CNCM I-12250 / La1 / NCC 533)</name>
    <dbReference type="NCBI Taxonomy" id="257314"/>
    <lineage>
        <taxon>Bacteria</taxon>
        <taxon>Bacillati</taxon>
        <taxon>Bacillota</taxon>
        <taxon>Bacilli</taxon>
        <taxon>Lactobacillales</taxon>
        <taxon>Lactobacillaceae</taxon>
        <taxon>Lactobacillus</taxon>
    </lineage>
</organism>
<accession>P62435</accession>
<comment type="function">
    <text evidence="1">Forms part of the ribosomal stalk which helps the ribosome interact with GTP-bound translation factors.</text>
</comment>
<comment type="subunit">
    <text evidence="1">Part of the ribosomal stalk of the 50S ribosomal subunit. Interacts with L10 and the large rRNA to form the base of the stalk. L10 forms an elongated spine to which L12 dimers bind in a sequential fashion forming a multimeric L10(L12)X complex.</text>
</comment>
<comment type="PTM">
    <text evidence="1">One or more lysine residues are methylated.</text>
</comment>
<comment type="similarity">
    <text evidence="1">Belongs to the universal ribosomal protein uL11 family.</text>
</comment>